<proteinExistence type="inferred from homology"/>
<name>BIOF_JANMA</name>
<reference key="1">
    <citation type="journal article" date="2007" name="PLoS Genet.">
        <title>Genome analysis of Minibacterium massiliensis highlights the convergent evolution of water-living bacteria.</title>
        <authorList>
            <person name="Audic S."/>
            <person name="Robert C."/>
            <person name="Campagna B."/>
            <person name="Parinello H."/>
            <person name="Claverie J.-M."/>
            <person name="Raoult D."/>
            <person name="Drancourt M."/>
        </authorList>
    </citation>
    <scope>NUCLEOTIDE SEQUENCE [LARGE SCALE GENOMIC DNA]</scope>
    <source>
        <strain>Marseille</strain>
    </source>
</reference>
<comment type="function">
    <text evidence="1">Catalyzes the decarboxylative condensation of pimeloyl-[acyl-carrier protein] and L-alanine to produce 8-amino-7-oxononanoate (AON), [acyl-carrier protein], and carbon dioxide.</text>
</comment>
<comment type="catalytic activity">
    <reaction evidence="1">
        <text>6-carboxyhexanoyl-[ACP] + L-alanine + H(+) = (8S)-8-amino-7-oxononanoate + holo-[ACP] + CO2</text>
        <dbReference type="Rhea" id="RHEA:42288"/>
        <dbReference type="Rhea" id="RHEA-COMP:9685"/>
        <dbReference type="Rhea" id="RHEA-COMP:9955"/>
        <dbReference type="ChEBI" id="CHEBI:15378"/>
        <dbReference type="ChEBI" id="CHEBI:16526"/>
        <dbReference type="ChEBI" id="CHEBI:57972"/>
        <dbReference type="ChEBI" id="CHEBI:64479"/>
        <dbReference type="ChEBI" id="CHEBI:78846"/>
        <dbReference type="ChEBI" id="CHEBI:149468"/>
        <dbReference type="EC" id="2.3.1.47"/>
    </reaction>
</comment>
<comment type="cofactor">
    <cofactor evidence="1">
        <name>pyridoxal 5'-phosphate</name>
        <dbReference type="ChEBI" id="CHEBI:597326"/>
    </cofactor>
</comment>
<comment type="pathway">
    <text evidence="1">Cofactor biosynthesis; biotin biosynthesis.</text>
</comment>
<comment type="subunit">
    <text evidence="1">Homodimer.</text>
</comment>
<comment type="similarity">
    <text evidence="1">Belongs to the class-II pyridoxal-phosphate-dependent aminotransferase family. BioF subfamily.</text>
</comment>
<keyword id="KW-0093">Biotin biosynthesis</keyword>
<keyword id="KW-0663">Pyridoxal phosphate</keyword>
<keyword id="KW-0808">Transferase</keyword>
<organism>
    <name type="scientific">Janthinobacterium sp. (strain Marseille)</name>
    <name type="common">Minibacterium massiliensis</name>
    <dbReference type="NCBI Taxonomy" id="375286"/>
    <lineage>
        <taxon>Bacteria</taxon>
        <taxon>Pseudomonadati</taxon>
        <taxon>Pseudomonadota</taxon>
        <taxon>Betaproteobacteria</taxon>
        <taxon>Burkholderiales</taxon>
        <taxon>Oxalobacteraceae</taxon>
        <taxon>Janthinobacterium</taxon>
    </lineage>
</organism>
<protein>
    <recommendedName>
        <fullName evidence="1">8-amino-7-oxononanoate synthase</fullName>
        <shortName evidence="1">AONS</shortName>
        <ecNumber evidence="1">2.3.1.47</ecNumber>
    </recommendedName>
    <alternativeName>
        <fullName evidence="1">7-keto-8-amino-pelargonic acid synthase</fullName>
        <shortName evidence="1">7-KAP synthase</shortName>
        <shortName evidence="1">KAPA synthase</shortName>
    </alternativeName>
    <alternativeName>
        <fullName evidence="1">8-amino-7-ketopelargonate synthase</fullName>
    </alternativeName>
</protein>
<accession>A6SU64</accession>
<sequence length="394" mass="42001">MNKLIAGLEQQLAQLDAQSLRRRRRTTESPCAPRVQVDGRAMLAFCSNDYLGLAAHPRIIDALQQGASLYGAGSGASHLISGHSRAHAELEERLAEFVAPQIADARALYFCTGYMANIAILSALSGSGADLFSESLNHASLIDGARLSRANVQVYPHGDLDKLAILLAASTADNKMVVTDSVFSMDGDLAALPQLLALCEQHGAWLVVDDAHGFGVLGEHGRGVLEHFALRSPNLVYMGTLGKAAGVAGAFVAAHKSVIEWMVQRARPYIYTTAAPPAVAHALLTSLEIIGGAEGAERRAHLQTLIAQWRSALQLQRWRALASDTAIQPVVIGANDVAMKIAAALYEQNIWVPAIRPPTVPAGTARLRVTLSAAHTAEQVTQLVGALQQLEQQD</sequence>
<gene>
    <name evidence="1" type="primary">bioF</name>
    <name type="ordered locus">mma_0121</name>
</gene>
<feature type="chain" id="PRO_0000381011" description="8-amino-7-oxononanoate synthase">
    <location>
        <begin position="1"/>
        <end position="394"/>
    </location>
</feature>
<feature type="binding site" evidence="1">
    <location>
        <position position="22"/>
    </location>
    <ligand>
        <name>substrate</name>
    </ligand>
</feature>
<feature type="binding site" evidence="1">
    <location>
        <begin position="113"/>
        <end position="114"/>
    </location>
    <ligand>
        <name>pyridoxal 5'-phosphate</name>
        <dbReference type="ChEBI" id="CHEBI:597326"/>
    </ligand>
</feature>
<feature type="binding site" evidence="1">
    <location>
        <position position="138"/>
    </location>
    <ligand>
        <name>substrate</name>
    </ligand>
</feature>
<feature type="binding site" evidence="1">
    <location>
        <position position="184"/>
    </location>
    <ligand>
        <name>pyridoxal 5'-phosphate</name>
        <dbReference type="ChEBI" id="CHEBI:597326"/>
    </ligand>
</feature>
<feature type="binding site" evidence="1">
    <location>
        <position position="212"/>
    </location>
    <ligand>
        <name>pyridoxal 5'-phosphate</name>
        <dbReference type="ChEBI" id="CHEBI:597326"/>
    </ligand>
</feature>
<feature type="binding site" evidence="1">
    <location>
        <position position="240"/>
    </location>
    <ligand>
        <name>pyridoxal 5'-phosphate</name>
        <dbReference type="ChEBI" id="CHEBI:597326"/>
    </ligand>
</feature>
<feature type="binding site" evidence="1">
    <location>
        <position position="359"/>
    </location>
    <ligand>
        <name>substrate</name>
    </ligand>
</feature>
<feature type="modified residue" description="N6-(pyridoxal phosphate)lysine" evidence="1">
    <location>
        <position position="243"/>
    </location>
</feature>
<dbReference type="EC" id="2.3.1.47" evidence="1"/>
<dbReference type="EMBL" id="CP000269">
    <property type="protein sequence ID" value="ABR88577.1"/>
    <property type="molecule type" value="Genomic_DNA"/>
</dbReference>
<dbReference type="RefSeq" id="WP_011979347.1">
    <property type="nucleotide sequence ID" value="NC_009659.1"/>
</dbReference>
<dbReference type="SMR" id="A6SU64"/>
<dbReference type="STRING" id="375286.mma_0121"/>
<dbReference type="KEGG" id="mms:mma_0121"/>
<dbReference type="eggNOG" id="COG0156">
    <property type="taxonomic scope" value="Bacteria"/>
</dbReference>
<dbReference type="HOGENOM" id="CLU_015846_11_2_4"/>
<dbReference type="OrthoDB" id="9807157at2"/>
<dbReference type="UniPathway" id="UPA00078"/>
<dbReference type="Proteomes" id="UP000006388">
    <property type="component" value="Chromosome"/>
</dbReference>
<dbReference type="GO" id="GO:0008710">
    <property type="term" value="F:8-amino-7-oxononanoate synthase activity"/>
    <property type="evidence" value="ECO:0007669"/>
    <property type="project" value="UniProtKB-UniRule"/>
</dbReference>
<dbReference type="GO" id="GO:0030170">
    <property type="term" value="F:pyridoxal phosphate binding"/>
    <property type="evidence" value="ECO:0007669"/>
    <property type="project" value="UniProtKB-UniRule"/>
</dbReference>
<dbReference type="GO" id="GO:0009102">
    <property type="term" value="P:biotin biosynthetic process"/>
    <property type="evidence" value="ECO:0007669"/>
    <property type="project" value="UniProtKB-UniRule"/>
</dbReference>
<dbReference type="Gene3D" id="3.90.1150.10">
    <property type="entry name" value="Aspartate Aminotransferase, domain 1"/>
    <property type="match status" value="1"/>
</dbReference>
<dbReference type="Gene3D" id="3.40.640.10">
    <property type="entry name" value="Type I PLP-dependent aspartate aminotransferase-like (Major domain)"/>
    <property type="match status" value="1"/>
</dbReference>
<dbReference type="HAMAP" id="MF_01693">
    <property type="entry name" value="BioF_aminotrans_2"/>
    <property type="match status" value="1"/>
</dbReference>
<dbReference type="InterPro" id="IPR004839">
    <property type="entry name" value="Aminotransferase_I/II_large"/>
</dbReference>
<dbReference type="InterPro" id="IPR050087">
    <property type="entry name" value="AON_synthase_class-II"/>
</dbReference>
<dbReference type="InterPro" id="IPR004723">
    <property type="entry name" value="AONS_Archaea/Proteobacteria"/>
</dbReference>
<dbReference type="InterPro" id="IPR022834">
    <property type="entry name" value="AONS_Proteobacteria"/>
</dbReference>
<dbReference type="InterPro" id="IPR015424">
    <property type="entry name" value="PyrdxlP-dep_Trfase"/>
</dbReference>
<dbReference type="InterPro" id="IPR015421">
    <property type="entry name" value="PyrdxlP-dep_Trfase_major"/>
</dbReference>
<dbReference type="InterPro" id="IPR015422">
    <property type="entry name" value="PyrdxlP-dep_Trfase_small"/>
</dbReference>
<dbReference type="NCBIfam" id="TIGR00858">
    <property type="entry name" value="bioF"/>
    <property type="match status" value="1"/>
</dbReference>
<dbReference type="PANTHER" id="PTHR13693:SF100">
    <property type="entry name" value="8-AMINO-7-OXONONANOATE SYNTHASE"/>
    <property type="match status" value="1"/>
</dbReference>
<dbReference type="PANTHER" id="PTHR13693">
    <property type="entry name" value="CLASS II AMINOTRANSFERASE/8-AMINO-7-OXONONANOATE SYNTHASE"/>
    <property type="match status" value="1"/>
</dbReference>
<dbReference type="Pfam" id="PF00155">
    <property type="entry name" value="Aminotran_1_2"/>
    <property type="match status" value="1"/>
</dbReference>
<dbReference type="SUPFAM" id="SSF53383">
    <property type="entry name" value="PLP-dependent transferases"/>
    <property type="match status" value="1"/>
</dbReference>
<evidence type="ECO:0000255" key="1">
    <source>
        <dbReference type="HAMAP-Rule" id="MF_01693"/>
    </source>
</evidence>